<reference key="1">
    <citation type="journal article" date="2002" name="J. Bacteriol.">
        <title>Whole-genome comparison of Mycobacterium tuberculosis clinical and laboratory strains.</title>
        <authorList>
            <person name="Fleischmann R.D."/>
            <person name="Alland D."/>
            <person name="Eisen J.A."/>
            <person name="Carpenter L."/>
            <person name="White O."/>
            <person name="Peterson J.D."/>
            <person name="DeBoy R.T."/>
            <person name="Dodson R.J."/>
            <person name="Gwinn M.L."/>
            <person name="Haft D.H."/>
            <person name="Hickey E.K."/>
            <person name="Kolonay J.F."/>
            <person name="Nelson W.C."/>
            <person name="Umayam L.A."/>
            <person name="Ermolaeva M.D."/>
            <person name="Salzberg S.L."/>
            <person name="Delcher A."/>
            <person name="Utterback T.R."/>
            <person name="Weidman J.F."/>
            <person name="Khouri H.M."/>
            <person name="Gill J."/>
            <person name="Mikula A."/>
            <person name="Bishai W."/>
            <person name="Jacobs W.R. Jr."/>
            <person name="Venter J.C."/>
            <person name="Fraser C.M."/>
        </authorList>
    </citation>
    <scope>NUCLEOTIDE SEQUENCE [LARGE SCALE GENOMIC DNA]</scope>
    <source>
        <strain>CDC 1551 / Oshkosh</strain>
    </source>
</reference>
<feature type="chain" id="PRO_0000426874" description="3-dehydroquinate synthase">
    <location>
        <begin position="1"/>
        <end position="362"/>
    </location>
</feature>
<feature type="binding site" evidence="1">
    <location>
        <begin position="73"/>
        <end position="78"/>
    </location>
    <ligand>
        <name>NAD(+)</name>
        <dbReference type="ChEBI" id="CHEBI:57540"/>
    </ligand>
</feature>
<feature type="binding site" evidence="1">
    <location>
        <begin position="107"/>
        <end position="111"/>
    </location>
    <ligand>
        <name>NAD(+)</name>
        <dbReference type="ChEBI" id="CHEBI:57540"/>
    </ligand>
</feature>
<feature type="binding site" evidence="1">
    <location>
        <begin position="131"/>
        <end position="132"/>
    </location>
    <ligand>
        <name>NAD(+)</name>
        <dbReference type="ChEBI" id="CHEBI:57540"/>
    </ligand>
</feature>
<feature type="binding site" evidence="1">
    <location>
        <position position="144"/>
    </location>
    <ligand>
        <name>NAD(+)</name>
        <dbReference type="ChEBI" id="CHEBI:57540"/>
    </ligand>
</feature>
<feature type="binding site" evidence="1">
    <location>
        <position position="153"/>
    </location>
    <ligand>
        <name>NAD(+)</name>
        <dbReference type="ChEBI" id="CHEBI:57540"/>
    </ligand>
</feature>
<feature type="binding site" evidence="1">
    <location>
        <begin position="171"/>
        <end position="174"/>
    </location>
    <ligand>
        <name>NAD(+)</name>
        <dbReference type="ChEBI" id="CHEBI:57540"/>
    </ligand>
</feature>
<feature type="binding site" evidence="1">
    <location>
        <position position="186"/>
    </location>
    <ligand>
        <name>Zn(2+)</name>
        <dbReference type="ChEBI" id="CHEBI:29105"/>
    </ligand>
</feature>
<feature type="binding site" evidence="1">
    <location>
        <position position="249"/>
    </location>
    <ligand>
        <name>Zn(2+)</name>
        <dbReference type="ChEBI" id="CHEBI:29105"/>
    </ligand>
</feature>
<feature type="binding site" evidence="1">
    <location>
        <position position="265"/>
    </location>
    <ligand>
        <name>Zn(2+)</name>
        <dbReference type="ChEBI" id="CHEBI:29105"/>
    </ligand>
</feature>
<sequence length="362" mass="38119">MTDIGAPVTVQVAVDPPYPVVIGTGLLDELEDLLADRHKVAVVHQPGLAETAEEIRKRLAGKGVDAHRIEIPDAEAGKDLPVVGFIWEVLGRIGIGRKDALVSLGGGAATDVAGFAAATWLRGVSIVHLPTTLLGMVDAAVGGKTGINTDAGKNLVGAFHQPLAVLVDLATLQTLPRDEMICGMAEVVKAGFIADPVILDLIEADPQAALDPAGDVLPELIRRAITVKAEVVAADEKESELREILNYGHTLGHAIERRERYRWRHGAAVSVGLVFAAELARLAGRLDDATAQRHRTILSSLGLPVSYDPDALPQLLEIMAGDKKTRAGVLRFVVLDGLAKPGRMVGPDPGLLVTAYAGVCAP</sequence>
<proteinExistence type="inferred from homology"/>
<comment type="function">
    <text evidence="1">Catalyzes the conversion of 3-deoxy-D-arabino-heptulosonate 7-phosphate (DAHP) to dehydroquinate (DHQ).</text>
</comment>
<comment type="catalytic activity">
    <reaction evidence="1">
        <text>7-phospho-2-dehydro-3-deoxy-D-arabino-heptonate = 3-dehydroquinate + phosphate</text>
        <dbReference type="Rhea" id="RHEA:21968"/>
        <dbReference type="ChEBI" id="CHEBI:32364"/>
        <dbReference type="ChEBI" id="CHEBI:43474"/>
        <dbReference type="ChEBI" id="CHEBI:58394"/>
        <dbReference type="EC" id="4.2.3.4"/>
    </reaction>
</comment>
<comment type="cofactor">
    <cofactor evidence="1">
        <name>NAD(+)</name>
        <dbReference type="ChEBI" id="CHEBI:57540"/>
    </cofactor>
</comment>
<comment type="cofactor">
    <cofactor evidence="1">
        <name>Co(2+)</name>
        <dbReference type="ChEBI" id="CHEBI:48828"/>
    </cofactor>
    <cofactor evidence="1">
        <name>Zn(2+)</name>
        <dbReference type="ChEBI" id="CHEBI:29105"/>
    </cofactor>
    <text evidence="1">Binds 1 divalent metal cation per subunit. Can use either Co(2+) or Zn(2+).</text>
</comment>
<comment type="pathway">
    <text evidence="1">Metabolic intermediate biosynthesis; chorismate biosynthesis; chorismate from D-erythrose 4-phosphate and phosphoenolpyruvate: step 2/7.</text>
</comment>
<comment type="subcellular location">
    <subcellularLocation>
        <location evidence="1">Cytoplasm</location>
    </subcellularLocation>
</comment>
<comment type="similarity">
    <text evidence="1 2">Belongs to the sugar phosphate cyclases superfamily. Dehydroquinate synthase family.</text>
</comment>
<gene>
    <name evidence="1" type="primary">aroB</name>
    <name type="ordered locus">MT2613</name>
</gene>
<name>AROB_MYCTO</name>
<protein>
    <recommendedName>
        <fullName evidence="1">3-dehydroquinate synthase</fullName>
        <shortName evidence="1">DHQS</shortName>
        <ecNumber evidence="1">4.2.3.4</ecNumber>
    </recommendedName>
</protein>
<keyword id="KW-0028">Amino-acid biosynthesis</keyword>
<keyword id="KW-0057">Aromatic amino acid biosynthesis</keyword>
<keyword id="KW-0170">Cobalt</keyword>
<keyword id="KW-0963">Cytoplasm</keyword>
<keyword id="KW-0456">Lyase</keyword>
<keyword id="KW-0479">Metal-binding</keyword>
<keyword id="KW-0520">NAD</keyword>
<keyword id="KW-0547">Nucleotide-binding</keyword>
<keyword id="KW-1185">Reference proteome</keyword>
<keyword id="KW-0862">Zinc</keyword>
<dbReference type="EC" id="4.2.3.4" evidence="1"/>
<dbReference type="EMBL" id="AE000516">
    <property type="protein sequence ID" value="AAK46923.1"/>
    <property type="molecule type" value="Genomic_DNA"/>
</dbReference>
<dbReference type="PIR" id="S17768">
    <property type="entry name" value="S17768"/>
</dbReference>
<dbReference type="RefSeq" id="WP_003413008.1">
    <property type="nucleotide sequence ID" value="NZ_KK341227.1"/>
</dbReference>
<dbReference type="SMR" id="P9WPX8"/>
<dbReference type="KEGG" id="mtc:MT2613"/>
<dbReference type="PATRIC" id="fig|83331.31.peg.2819"/>
<dbReference type="HOGENOM" id="CLU_001201_0_3_11"/>
<dbReference type="UniPathway" id="UPA00053">
    <property type="reaction ID" value="UER00085"/>
</dbReference>
<dbReference type="Proteomes" id="UP000001020">
    <property type="component" value="Chromosome"/>
</dbReference>
<dbReference type="GO" id="GO:0005737">
    <property type="term" value="C:cytoplasm"/>
    <property type="evidence" value="ECO:0007669"/>
    <property type="project" value="UniProtKB-SubCell"/>
</dbReference>
<dbReference type="GO" id="GO:0003856">
    <property type="term" value="F:3-dehydroquinate synthase activity"/>
    <property type="evidence" value="ECO:0007669"/>
    <property type="project" value="UniProtKB-UniRule"/>
</dbReference>
<dbReference type="GO" id="GO:0046872">
    <property type="term" value="F:metal ion binding"/>
    <property type="evidence" value="ECO:0007669"/>
    <property type="project" value="UniProtKB-KW"/>
</dbReference>
<dbReference type="GO" id="GO:0000166">
    <property type="term" value="F:nucleotide binding"/>
    <property type="evidence" value="ECO:0007669"/>
    <property type="project" value="UniProtKB-KW"/>
</dbReference>
<dbReference type="GO" id="GO:0008652">
    <property type="term" value="P:amino acid biosynthetic process"/>
    <property type="evidence" value="ECO:0007669"/>
    <property type="project" value="UniProtKB-KW"/>
</dbReference>
<dbReference type="GO" id="GO:0009073">
    <property type="term" value="P:aromatic amino acid family biosynthetic process"/>
    <property type="evidence" value="ECO:0007669"/>
    <property type="project" value="UniProtKB-KW"/>
</dbReference>
<dbReference type="GO" id="GO:0009423">
    <property type="term" value="P:chorismate biosynthetic process"/>
    <property type="evidence" value="ECO:0007669"/>
    <property type="project" value="UniProtKB-UniRule"/>
</dbReference>
<dbReference type="CDD" id="cd08195">
    <property type="entry name" value="DHQS"/>
    <property type="match status" value="1"/>
</dbReference>
<dbReference type="FunFam" id="1.20.1090.10:FF:000006">
    <property type="entry name" value="3-dehydroquinate synthase"/>
    <property type="match status" value="1"/>
</dbReference>
<dbReference type="FunFam" id="3.40.50.1970:FF:000012">
    <property type="entry name" value="3-dehydroquinate synthase"/>
    <property type="match status" value="1"/>
</dbReference>
<dbReference type="Gene3D" id="3.40.50.1970">
    <property type="match status" value="1"/>
</dbReference>
<dbReference type="Gene3D" id="1.20.1090.10">
    <property type="entry name" value="Dehydroquinate synthase-like - alpha domain"/>
    <property type="match status" value="1"/>
</dbReference>
<dbReference type="HAMAP" id="MF_00110">
    <property type="entry name" value="DHQ_synthase"/>
    <property type="match status" value="1"/>
</dbReference>
<dbReference type="InterPro" id="IPR050071">
    <property type="entry name" value="Dehydroquinate_synthase"/>
</dbReference>
<dbReference type="InterPro" id="IPR016037">
    <property type="entry name" value="DHQ_synth_AroB"/>
</dbReference>
<dbReference type="InterPro" id="IPR030963">
    <property type="entry name" value="DHQ_synth_fam"/>
</dbReference>
<dbReference type="InterPro" id="IPR030960">
    <property type="entry name" value="DHQS/DOIS_N"/>
</dbReference>
<dbReference type="InterPro" id="IPR056179">
    <property type="entry name" value="DHQS_C"/>
</dbReference>
<dbReference type="NCBIfam" id="TIGR01357">
    <property type="entry name" value="aroB"/>
    <property type="match status" value="1"/>
</dbReference>
<dbReference type="PANTHER" id="PTHR43622">
    <property type="entry name" value="3-DEHYDROQUINATE SYNTHASE"/>
    <property type="match status" value="1"/>
</dbReference>
<dbReference type="PANTHER" id="PTHR43622:SF7">
    <property type="entry name" value="3-DEHYDROQUINATE SYNTHASE, CHLOROPLASTIC"/>
    <property type="match status" value="1"/>
</dbReference>
<dbReference type="Pfam" id="PF01761">
    <property type="entry name" value="DHQ_synthase"/>
    <property type="match status" value="1"/>
</dbReference>
<dbReference type="Pfam" id="PF24621">
    <property type="entry name" value="DHQS_C"/>
    <property type="match status" value="1"/>
</dbReference>
<dbReference type="PIRSF" id="PIRSF001455">
    <property type="entry name" value="DHQ_synth"/>
    <property type="match status" value="1"/>
</dbReference>
<dbReference type="SUPFAM" id="SSF56796">
    <property type="entry name" value="Dehydroquinate synthase-like"/>
    <property type="match status" value="1"/>
</dbReference>
<evidence type="ECO:0000255" key="1">
    <source>
        <dbReference type="HAMAP-Rule" id="MF_00110"/>
    </source>
</evidence>
<evidence type="ECO:0000305" key="2"/>
<accession>P9WPX8</accession>
<accession>L0TCN7</accession>
<accession>P0A4Z4</accession>
<accession>P36919</accession>
<accession>P95015</accession>
<organism>
    <name type="scientific">Mycobacterium tuberculosis (strain CDC 1551 / Oshkosh)</name>
    <dbReference type="NCBI Taxonomy" id="83331"/>
    <lineage>
        <taxon>Bacteria</taxon>
        <taxon>Bacillati</taxon>
        <taxon>Actinomycetota</taxon>
        <taxon>Actinomycetes</taxon>
        <taxon>Mycobacteriales</taxon>
        <taxon>Mycobacteriaceae</taxon>
        <taxon>Mycobacterium</taxon>
        <taxon>Mycobacterium tuberculosis complex</taxon>
    </lineage>
</organism>